<protein>
    <recommendedName>
        <fullName evidence="1">Small ribosomal subunit protein uS4</fullName>
    </recommendedName>
    <alternativeName>
        <fullName evidence="2">30S ribosomal protein S4</fullName>
    </alternativeName>
</protein>
<evidence type="ECO:0000255" key="1">
    <source>
        <dbReference type="HAMAP-Rule" id="MF_01306"/>
    </source>
</evidence>
<evidence type="ECO:0000305" key="2"/>
<keyword id="KW-1185">Reference proteome</keyword>
<keyword id="KW-0687">Ribonucleoprotein</keyword>
<keyword id="KW-0689">Ribosomal protein</keyword>
<keyword id="KW-0694">RNA-binding</keyword>
<keyword id="KW-0699">rRNA-binding</keyword>
<feature type="chain" id="PRO_1000214309" description="Small ribosomal subunit protein uS4">
    <location>
        <begin position="1"/>
        <end position="206"/>
    </location>
</feature>
<feature type="domain" description="S4 RNA-binding" evidence="1">
    <location>
        <begin position="96"/>
        <end position="156"/>
    </location>
</feature>
<name>RS4_TERTT</name>
<dbReference type="EMBL" id="CP001614">
    <property type="protein sequence ID" value="ACR14656.1"/>
    <property type="molecule type" value="Genomic_DNA"/>
</dbReference>
<dbReference type="RefSeq" id="WP_015820770.1">
    <property type="nucleotide sequence ID" value="NC_012997.1"/>
</dbReference>
<dbReference type="SMR" id="C5BQ85"/>
<dbReference type="STRING" id="377629.TERTU_0932"/>
<dbReference type="KEGG" id="ttu:TERTU_0932"/>
<dbReference type="eggNOG" id="COG0522">
    <property type="taxonomic scope" value="Bacteria"/>
</dbReference>
<dbReference type="HOGENOM" id="CLU_092403_0_2_6"/>
<dbReference type="OrthoDB" id="9803672at2"/>
<dbReference type="Proteomes" id="UP000009080">
    <property type="component" value="Chromosome"/>
</dbReference>
<dbReference type="GO" id="GO:0015935">
    <property type="term" value="C:small ribosomal subunit"/>
    <property type="evidence" value="ECO:0007669"/>
    <property type="project" value="InterPro"/>
</dbReference>
<dbReference type="GO" id="GO:0019843">
    <property type="term" value="F:rRNA binding"/>
    <property type="evidence" value="ECO:0007669"/>
    <property type="project" value="UniProtKB-UniRule"/>
</dbReference>
<dbReference type="GO" id="GO:0003735">
    <property type="term" value="F:structural constituent of ribosome"/>
    <property type="evidence" value="ECO:0007669"/>
    <property type="project" value="InterPro"/>
</dbReference>
<dbReference type="GO" id="GO:0042274">
    <property type="term" value="P:ribosomal small subunit biogenesis"/>
    <property type="evidence" value="ECO:0007669"/>
    <property type="project" value="TreeGrafter"/>
</dbReference>
<dbReference type="GO" id="GO:0006412">
    <property type="term" value="P:translation"/>
    <property type="evidence" value="ECO:0007669"/>
    <property type="project" value="UniProtKB-UniRule"/>
</dbReference>
<dbReference type="CDD" id="cd00165">
    <property type="entry name" value="S4"/>
    <property type="match status" value="1"/>
</dbReference>
<dbReference type="FunFam" id="1.10.1050.10:FF:000001">
    <property type="entry name" value="30S ribosomal protein S4"/>
    <property type="match status" value="1"/>
</dbReference>
<dbReference type="FunFam" id="3.10.290.10:FF:000001">
    <property type="entry name" value="30S ribosomal protein S4"/>
    <property type="match status" value="1"/>
</dbReference>
<dbReference type="Gene3D" id="1.10.1050.10">
    <property type="entry name" value="Ribosomal Protein S4 Delta 41, Chain A, domain 1"/>
    <property type="match status" value="1"/>
</dbReference>
<dbReference type="Gene3D" id="3.10.290.10">
    <property type="entry name" value="RNA-binding S4 domain"/>
    <property type="match status" value="1"/>
</dbReference>
<dbReference type="HAMAP" id="MF_01306_B">
    <property type="entry name" value="Ribosomal_uS4_B"/>
    <property type="match status" value="1"/>
</dbReference>
<dbReference type="InterPro" id="IPR022801">
    <property type="entry name" value="Ribosomal_uS4"/>
</dbReference>
<dbReference type="InterPro" id="IPR005709">
    <property type="entry name" value="Ribosomal_uS4_bac-type"/>
</dbReference>
<dbReference type="InterPro" id="IPR018079">
    <property type="entry name" value="Ribosomal_uS4_CS"/>
</dbReference>
<dbReference type="InterPro" id="IPR001912">
    <property type="entry name" value="Ribosomal_uS4_N"/>
</dbReference>
<dbReference type="InterPro" id="IPR002942">
    <property type="entry name" value="S4_RNA-bd"/>
</dbReference>
<dbReference type="InterPro" id="IPR036986">
    <property type="entry name" value="S4_RNA-bd_sf"/>
</dbReference>
<dbReference type="NCBIfam" id="NF003717">
    <property type="entry name" value="PRK05327.1"/>
    <property type="match status" value="1"/>
</dbReference>
<dbReference type="NCBIfam" id="TIGR01017">
    <property type="entry name" value="rpsD_bact"/>
    <property type="match status" value="1"/>
</dbReference>
<dbReference type="PANTHER" id="PTHR11831">
    <property type="entry name" value="30S 40S RIBOSOMAL PROTEIN"/>
    <property type="match status" value="1"/>
</dbReference>
<dbReference type="PANTHER" id="PTHR11831:SF4">
    <property type="entry name" value="SMALL RIBOSOMAL SUBUNIT PROTEIN US4M"/>
    <property type="match status" value="1"/>
</dbReference>
<dbReference type="Pfam" id="PF00163">
    <property type="entry name" value="Ribosomal_S4"/>
    <property type="match status" value="1"/>
</dbReference>
<dbReference type="Pfam" id="PF01479">
    <property type="entry name" value="S4"/>
    <property type="match status" value="1"/>
</dbReference>
<dbReference type="SMART" id="SM01390">
    <property type="entry name" value="Ribosomal_S4"/>
    <property type="match status" value="1"/>
</dbReference>
<dbReference type="SMART" id="SM00363">
    <property type="entry name" value="S4"/>
    <property type="match status" value="1"/>
</dbReference>
<dbReference type="SUPFAM" id="SSF55174">
    <property type="entry name" value="Alpha-L RNA-binding motif"/>
    <property type="match status" value="1"/>
</dbReference>
<dbReference type="PROSITE" id="PS00632">
    <property type="entry name" value="RIBOSOMAL_S4"/>
    <property type="match status" value="1"/>
</dbReference>
<dbReference type="PROSITE" id="PS50889">
    <property type="entry name" value="S4"/>
    <property type="match status" value="1"/>
</dbReference>
<sequence length="206" mass="23288">MARYLGPTCKLSRREGTDLFLKSGVRPLESKCKAETAPGQHGQRRGRLSDYGVQLREKQKVRRTYGLLEKQFRSYYKEAARLKGATGENLLKLLESRLDNVVYRMGFGATRAESRQLVSHKAILVNGKALNIPSYQVSEGDVIAVREKSKNQLRIQNALGIAAQRPDVEWVDVNADKKEGTFKRVPDRVDLPADINENLIVELYSK</sequence>
<gene>
    <name evidence="1" type="primary">rpsD</name>
    <name type="ordered locus">TERTU_0932</name>
</gene>
<proteinExistence type="inferred from homology"/>
<accession>C5BQ85</accession>
<organism>
    <name type="scientific">Teredinibacter turnerae (strain ATCC 39867 / T7901)</name>
    <dbReference type="NCBI Taxonomy" id="377629"/>
    <lineage>
        <taxon>Bacteria</taxon>
        <taxon>Pseudomonadati</taxon>
        <taxon>Pseudomonadota</taxon>
        <taxon>Gammaproteobacteria</taxon>
        <taxon>Cellvibrionales</taxon>
        <taxon>Cellvibrionaceae</taxon>
        <taxon>Teredinibacter</taxon>
    </lineage>
</organism>
<reference key="1">
    <citation type="journal article" date="2009" name="PLoS ONE">
        <title>The complete genome of Teredinibacter turnerae T7901: an intracellular endosymbiont of marine wood-boring bivalves (shipworms).</title>
        <authorList>
            <person name="Yang J.C."/>
            <person name="Madupu R."/>
            <person name="Durkin A.S."/>
            <person name="Ekborg N.A."/>
            <person name="Pedamallu C.S."/>
            <person name="Hostetler J.B."/>
            <person name="Radune D."/>
            <person name="Toms B.S."/>
            <person name="Henrissat B."/>
            <person name="Coutinho P.M."/>
            <person name="Schwarz S."/>
            <person name="Field L."/>
            <person name="Trindade-Silva A.E."/>
            <person name="Soares C.A.G."/>
            <person name="Elshahawi S."/>
            <person name="Hanora A."/>
            <person name="Schmidt E.W."/>
            <person name="Haygood M.G."/>
            <person name="Posfai J."/>
            <person name="Benner J."/>
            <person name="Madinger C."/>
            <person name="Nove J."/>
            <person name="Anton B."/>
            <person name="Chaudhary K."/>
            <person name="Foster J."/>
            <person name="Holman A."/>
            <person name="Kumar S."/>
            <person name="Lessard P.A."/>
            <person name="Luyten Y.A."/>
            <person name="Slatko B."/>
            <person name="Wood N."/>
            <person name="Wu B."/>
            <person name="Teplitski M."/>
            <person name="Mougous J.D."/>
            <person name="Ward N."/>
            <person name="Eisen J.A."/>
            <person name="Badger J.H."/>
            <person name="Distel D.L."/>
        </authorList>
    </citation>
    <scope>NUCLEOTIDE SEQUENCE [LARGE SCALE GENOMIC DNA]</scope>
    <source>
        <strain>ATCC 39867 / T7901</strain>
    </source>
</reference>
<comment type="function">
    <text evidence="1">One of the primary rRNA binding proteins, it binds directly to 16S rRNA where it nucleates assembly of the body of the 30S subunit.</text>
</comment>
<comment type="function">
    <text evidence="1">With S5 and S12 plays an important role in translational accuracy.</text>
</comment>
<comment type="subunit">
    <text evidence="1">Part of the 30S ribosomal subunit. Contacts protein S5. The interaction surface between S4 and S5 is involved in control of translational fidelity.</text>
</comment>
<comment type="similarity">
    <text evidence="1">Belongs to the universal ribosomal protein uS4 family.</text>
</comment>